<reference key="1">
    <citation type="submission" date="2007-12" db="EMBL/GenBank/DDBJ databases">
        <title>Complete sequence of Methylobacterium extorquens PA1.</title>
        <authorList>
            <consortium name="US DOE Joint Genome Institute"/>
            <person name="Copeland A."/>
            <person name="Lucas S."/>
            <person name="Lapidus A."/>
            <person name="Barry K."/>
            <person name="Glavina del Rio T."/>
            <person name="Dalin E."/>
            <person name="Tice H."/>
            <person name="Pitluck S."/>
            <person name="Saunders E."/>
            <person name="Brettin T."/>
            <person name="Bruce D."/>
            <person name="Detter J.C."/>
            <person name="Han C."/>
            <person name="Schmutz J."/>
            <person name="Larimer F."/>
            <person name="Land M."/>
            <person name="Hauser L."/>
            <person name="Kyrpides N."/>
            <person name="Kim E."/>
            <person name="Marx C."/>
            <person name="Richardson P."/>
        </authorList>
    </citation>
    <scope>NUCLEOTIDE SEQUENCE [LARGE SCALE GENOMIC DNA]</scope>
    <source>
        <strain>PA1</strain>
    </source>
</reference>
<organism>
    <name type="scientific">Methylorubrum extorquens (strain PA1)</name>
    <name type="common">Methylobacterium extorquens</name>
    <dbReference type="NCBI Taxonomy" id="419610"/>
    <lineage>
        <taxon>Bacteria</taxon>
        <taxon>Pseudomonadati</taxon>
        <taxon>Pseudomonadota</taxon>
        <taxon>Alphaproteobacteria</taxon>
        <taxon>Hyphomicrobiales</taxon>
        <taxon>Methylobacteriaceae</taxon>
        <taxon>Methylorubrum</taxon>
    </lineage>
</organism>
<name>RL27_METEP</name>
<protein>
    <recommendedName>
        <fullName evidence="1">Large ribosomal subunit protein bL27</fullName>
    </recommendedName>
    <alternativeName>
        <fullName evidence="3">50S ribosomal protein L27</fullName>
    </alternativeName>
</protein>
<feature type="chain" id="PRO_1000128769" description="Large ribosomal subunit protein bL27">
    <location>
        <begin position="1"/>
        <end position="88"/>
    </location>
</feature>
<feature type="region of interest" description="Disordered" evidence="2">
    <location>
        <begin position="1"/>
        <end position="23"/>
    </location>
</feature>
<dbReference type="EMBL" id="CP000908">
    <property type="protein sequence ID" value="ABY32781.1"/>
    <property type="molecule type" value="Genomic_DNA"/>
</dbReference>
<dbReference type="RefSeq" id="WP_003603089.1">
    <property type="nucleotide sequence ID" value="NC_010172.1"/>
</dbReference>
<dbReference type="SMR" id="A9VYM7"/>
<dbReference type="GeneID" id="72992146"/>
<dbReference type="KEGG" id="mex:Mext_4413"/>
<dbReference type="eggNOG" id="COG0211">
    <property type="taxonomic scope" value="Bacteria"/>
</dbReference>
<dbReference type="HOGENOM" id="CLU_095424_4_1_5"/>
<dbReference type="BioCyc" id="MEXT419610:MEXT_RS22175-MONOMER"/>
<dbReference type="GO" id="GO:0022625">
    <property type="term" value="C:cytosolic large ribosomal subunit"/>
    <property type="evidence" value="ECO:0007669"/>
    <property type="project" value="TreeGrafter"/>
</dbReference>
<dbReference type="GO" id="GO:0003735">
    <property type="term" value="F:structural constituent of ribosome"/>
    <property type="evidence" value="ECO:0007669"/>
    <property type="project" value="InterPro"/>
</dbReference>
<dbReference type="GO" id="GO:0006412">
    <property type="term" value="P:translation"/>
    <property type="evidence" value="ECO:0007669"/>
    <property type="project" value="UniProtKB-UniRule"/>
</dbReference>
<dbReference type="FunFam" id="2.40.50.100:FF:000020">
    <property type="entry name" value="50S ribosomal protein L27"/>
    <property type="match status" value="1"/>
</dbReference>
<dbReference type="Gene3D" id="2.40.50.100">
    <property type="match status" value="1"/>
</dbReference>
<dbReference type="HAMAP" id="MF_00539">
    <property type="entry name" value="Ribosomal_bL27"/>
    <property type="match status" value="1"/>
</dbReference>
<dbReference type="InterPro" id="IPR001684">
    <property type="entry name" value="Ribosomal_bL27"/>
</dbReference>
<dbReference type="InterPro" id="IPR018261">
    <property type="entry name" value="Ribosomal_bL27_CS"/>
</dbReference>
<dbReference type="NCBIfam" id="TIGR00062">
    <property type="entry name" value="L27"/>
    <property type="match status" value="1"/>
</dbReference>
<dbReference type="PANTHER" id="PTHR15893:SF0">
    <property type="entry name" value="LARGE RIBOSOMAL SUBUNIT PROTEIN BL27M"/>
    <property type="match status" value="1"/>
</dbReference>
<dbReference type="PANTHER" id="PTHR15893">
    <property type="entry name" value="RIBOSOMAL PROTEIN L27"/>
    <property type="match status" value="1"/>
</dbReference>
<dbReference type="Pfam" id="PF01016">
    <property type="entry name" value="Ribosomal_L27"/>
    <property type="match status" value="1"/>
</dbReference>
<dbReference type="PRINTS" id="PR00063">
    <property type="entry name" value="RIBOSOMALL27"/>
</dbReference>
<dbReference type="SUPFAM" id="SSF110324">
    <property type="entry name" value="Ribosomal L27 protein-like"/>
    <property type="match status" value="1"/>
</dbReference>
<dbReference type="PROSITE" id="PS00831">
    <property type="entry name" value="RIBOSOMAL_L27"/>
    <property type="match status" value="1"/>
</dbReference>
<sequence length="88" mass="9466">MAHKKAGGSSRNGRDSAGRRLGVKKFGSEAVIPGNIIVRQRGTKWHPGTNVGMGKDHTLFALVPGKVQFETRRGRDFVTVVPLAQAAE</sequence>
<keyword id="KW-0687">Ribonucleoprotein</keyword>
<keyword id="KW-0689">Ribosomal protein</keyword>
<accession>A9VYM7</accession>
<gene>
    <name evidence="1" type="primary">rpmA</name>
    <name type="ordered locus">Mext_4413</name>
</gene>
<comment type="similarity">
    <text evidence="1">Belongs to the bacterial ribosomal protein bL27 family.</text>
</comment>
<proteinExistence type="inferred from homology"/>
<evidence type="ECO:0000255" key="1">
    <source>
        <dbReference type="HAMAP-Rule" id="MF_00539"/>
    </source>
</evidence>
<evidence type="ECO:0000256" key="2">
    <source>
        <dbReference type="SAM" id="MobiDB-lite"/>
    </source>
</evidence>
<evidence type="ECO:0000305" key="3"/>